<name>RSMG_RHIEC</name>
<proteinExistence type="inferred from homology"/>
<protein>
    <recommendedName>
        <fullName evidence="1">Ribosomal RNA small subunit methyltransferase G</fullName>
        <ecNumber evidence="1">2.1.1.170</ecNumber>
    </recommendedName>
    <alternativeName>
        <fullName evidence="1">16S rRNA 7-methylguanosine methyltransferase</fullName>
        <shortName evidence="1">16S rRNA m7G methyltransferase</shortName>
    </alternativeName>
</protein>
<evidence type="ECO:0000255" key="1">
    <source>
        <dbReference type="HAMAP-Rule" id="MF_00074"/>
    </source>
</evidence>
<keyword id="KW-0963">Cytoplasm</keyword>
<keyword id="KW-0489">Methyltransferase</keyword>
<keyword id="KW-1185">Reference proteome</keyword>
<keyword id="KW-0698">rRNA processing</keyword>
<keyword id="KW-0949">S-adenosyl-L-methionine</keyword>
<keyword id="KW-0808">Transferase</keyword>
<organism>
    <name type="scientific">Rhizobium etli (strain ATCC 51251 / DSM 11541 / JCM 21823 / NBRC 15573 / CFN 42)</name>
    <dbReference type="NCBI Taxonomy" id="347834"/>
    <lineage>
        <taxon>Bacteria</taxon>
        <taxon>Pseudomonadati</taxon>
        <taxon>Pseudomonadota</taxon>
        <taxon>Alphaproteobacteria</taxon>
        <taxon>Hyphomicrobiales</taxon>
        <taxon>Rhizobiaceae</taxon>
        <taxon>Rhizobium/Agrobacterium group</taxon>
        <taxon>Rhizobium</taxon>
    </lineage>
</organism>
<feature type="chain" id="PRO_1000010190" description="Ribosomal RNA small subunit methyltransferase G">
    <location>
        <begin position="1"/>
        <end position="205"/>
    </location>
</feature>
<feature type="binding site" evidence="1">
    <location>
        <position position="66"/>
    </location>
    <ligand>
        <name>S-adenosyl-L-methionine</name>
        <dbReference type="ChEBI" id="CHEBI:59789"/>
    </ligand>
</feature>
<feature type="binding site" evidence="1">
    <location>
        <position position="71"/>
    </location>
    <ligand>
        <name>S-adenosyl-L-methionine</name>
        <dbReference type="ChEBI" id="CHEBI:59789"/>
    </ligand>
</feature>
<feature type="binding site" evidence="1">
    <location>
        <begin position="119"/>
        <end position="120"/>
    </location>
    <ligand>
        <name>S-adenosyl-L-methionine</name>
        <dbReference type="ChEBI" id="CHEBI:59789"/>
    </ligand>
</feature>
<feature type="binding site" evidence="1">
    <location>
        <position position="135"/>
    </location>
    <ligand>
        <name>S-adenosyl-L-methionine</name>
        <dbReference type="ChEBI" id="CHEBI:59789"/>
    </ligand>
</feature>
<sequence>MELNGLRVSRETQGRLQHFALLFQKWAKTINLVAPSTLDALWHRHIADSSQIFQICPRPVTWVDLGSGGGFPGVITAIFLAELQGGWVHLVESNHKKAAFLRTALRETNARGSVHAIRIEDASAEIGDCDAISARALADLDGLIAYSAPWMLGKENCRGFFHKGRDYLREIAEARGRWEFDLIEHESAVEQESVILEISNLRRLV</sequence>
<accession>Q2K2S2</accession>
<gene>
    <name evidence="1" type="primary">rsmG</name>
    <name type="ordered locus">RHE_CH04121</name>
</gene>
<comment type="function">
    <text evidence="1">Specifically methylates the N7 position of guanine in position 527 of 16S rRNA.</text>
</comment>
<comment type="catalytic activity">
    <reaction evidence="1">
        <text>guanosine(527) in 16S rRNA + S-adenosyl-L-methionine = N(7)-methylguanosine(527) in 16S rRNA + S-adenosyl-L-homocysteine</text>
        <dbReference type="Rhea" id="RHEA:42732"/>
        <dbReference type="Rhea" id="RHEA-COMP:10209"/>
        <dbReference type="Rhea" id="RHEA-COMP:10210"/>
        <dbReference type="ChEBI" id="CHEBI:57856"/>
        <dbReference type="ChEBI" id="CHEBI:59789"/>
        <dbReference type="ChEBI" id="CHEBI:74269"/>
        <dbReference type="ChEBI" id="CHEBI:74480"/>
        <dbReference type="EC" id="2.1.1.170"/>
    </reaction>
</comment>
<comment type="subcellular location">
    <subcellularLocation>
        <location evidence="1">Cytoplasm</location>
    </subcellularLocation>
</comment>
<comment type="similarity">
    <text evidence="1">Belongs to the methyltransferase superfamily. RNA methyltransferase RsmG family.</text>
</comment>
<dbReference type="EC" id="2.1.1.170" evidence="1"/>
<dbReference type="EMBL" id="CP000133">
    <property type="protein sequence ID" value="ABC92864.1"/>
    <property type="molecule type" value="Genomic_DNA"/>
</dbReference>
<dbReference type="RefSeq" id="WP_011427301.1">
    <property type="nucleotide sequence ID" value="NC_007761.1"/>
</dbReference>
<dbReference type="SMR" id="Q2K2S2"/>
<dbReference type="KEGG" id="ret:RHE_CH04121"/>
<dbReference type="eggNOG" id="COG0357">
    <property type="taxonomic scope" value="Bacteria"/>
</dbReference>
<dbReference type="HOGENOM" id="CLU_065341_1_1_5"/>
<dbReference type="OrthoDB" id="9808773at2"/>
<dbReference type="Proteomes" id="UP000001936">
    <property type="component" value="Chromosome"/>
</dbReference>
<dbReference type="GO" id="GO:0005829">
    <property type="term" value="C:cytosol"/>
    <property type="evidence" value="ECO:0007669"/>
    <property type="project" value="TreeGrafter"/>
</dbReference>
<dbReference type="GO" id="GO:0070043">
    <property type="term" value="F:rRNA (guanine-N7-)-methyltransferase activity"/>
    <property type="evidence" value="ECO:0007669"/>
    <property type="project" value="UniProtKB-UniRule"/>
</dbReference>
<dbReference type="Gene3D" id="3.40.50.150">
    <property type="entry name" value="Vaccinia Virus protein VP39"/>
    <property type="match status" value="1"/>
</dbReference>
<dbReference type="HAMAP" id="MF_00074">
    <property type="entry name" value="16SrRNA_methyltr_G"/>
    <property type="match status" value="1"/>
</dbReference>
<dbReference type="InterPro" id="IPR003682">
    <property type="entry name" value="rRNA_ssu_MeTfrase_G"/>
</dbReference>
<dbReference type="InterPro" id="IPR029063">
    <property type="entry name" value="SAM-dependent_MTases_sf"/>
</dbReference>
<dbReference type="NCBIfam" id="TIGR00138">
    <property type="entry name" value="rsmG_gidB"/>
    <property type="match status" value="1"/>
</dbReference>
<dbReference type="PANTHER" id="PTHR31760">
    <property type="entry name" value="S-ADENOSYL-L-METHIONINE-DEPENDENT METHYLTRANSFERASES SUPERFAMILY PROTEIN"/>
    <property type="match status" value="1"/>
</dbReference>
<dbReference type="PANTHER" id="PTHR31760:SF0">
    <property type="entry name" value="S-ADENOSYL-L-METHIONINE-DEPENDENT METHYLTRANSFERASES SUPERFAMILY PROTEIN"/>
    <property type="match status" value="1"/>
</dbReference>
<dbReference type="Pfam" id="PF02527">
    <property type="entry name" value="GidB"/>
    <property type="match status" value="1"/>
</dbReference>
<dbReference type="PIRSF" id="PIRSF003078">
    <property type="entry name" value="GidB"/>
    <property type="match status" value="1"/>
</dbReference>
<dbReference type="SUPFAM" id="SSF53335">
    <property type="entry name" value="S-adenosyl-L-methionine-dependent methyltransferases"/>
    <property type="match status" value="1"/>
</dbReference>
<reference key="1">
    <citation type="journal article" date="2006" name="Proc. Natl. Acad. Sci. U.S.A.">
        <title>The partitioned Rhizobium etli genome: genetic and metabolic redundancy in seven interacting replicons.</title>
        <authorList>
            <person name="Gonzalez V."/>
            <person name="Santamaria R.I."/>
            <person name="Bustos P."/>
            <person name="Hernandez-Gonzalez I."/>
            <person name="Medrano-Soto A."/>
            <person name="Moreno-Hagelsieb G."/>
            <person name="Janga S.C."/>
            <person name="Ramirez M.A."/>
            <person name="Jimenez-Jacinto V."/>
            <person name="Collado-Vides J."/>
            <person name="Davila G."/>
        </authorList>
    </citation>
    <scope>NUCLEOTIDE SEQUENCE [LARGE SCALE GENOMIC DNA]</scope>
    <source>
        <strain>ATCC 51251 / DSM 11541 / JCM 21823 / NBRC 15573 / CFN 42</strain>
    </source>
</reference>